<feature type="chain" id="PRO_0000077724" description="Uncharacterized immunity region protein 6">
    <location>
        <begin position="1"/>
        <end position="70"/>
    </location>
</feature>
<reference key="1">
    <citation type="journal article" date="1985" name="Gene">
        <title>Nucleotide sequence of the immunity region of Bacillus subtilis bacteriophage phi 105: identification of the repressor gene and its mRNA and protein products.</title>
        <authorList>
            <person name="Cully D.F."/>
            <person name="Garro A.J."/>
        </authorList>
    </citation>
    <scope>NUCLEOTIDE SEQUENCE [GENOMIC DNA]</scope>
</reference>
<organism>
    <name type="scientific">Bacillus phage phi105</name>
    <name type="common">Bacteriophage phi-105</name>
    <dbReference type="NCBI Taxonomy" id="10717"/>
    <lineage>
        <taxon>Viruses</taxon>
        <taxon>Duplodnaviria</taxon>
        <taxon>Heunggongvirae</taxon>
        <taxon>Uroviricota</taxon>
        <taxon>Caudoviricetes</taxon>
        <taxon>Spizizenvirus</taxon>
        <taxon>Spizizenvirus sv105</taxon>
    </lineage>
</organism>
<accession>P10430</accession>
<proteinExistence type="predicted"/>
<sequence>MPACALNKKPAIGISEKKFEKALIEYMQNANFKREPKIPQEKQQDYDKLHQKIISIEKQRRNTKKPGPWS</sequence>
<dbReference type="EMBL" id="M11920">
    <property type="status" value="NOT_ANNOTATED_CDS"/>
    <property type="molecule type" value="Genomic_DNA"/>
</dbReference>
<dbReference type="SMR" id="P10430"/>
<protein>
    <recommendedName>
        <fullName>Uncharacterized immunity region protein 6</fullName>
    </recommendedName>
</protein>
<organismHost>
    <name type="scientific">Bacillus subtilis</name>
    <dbReference type="NCBI Taxonomy" id="1423"/>
</organismHost>
<name>YIM6_BPPH1</name>